<organism>
    <name type="scientific">Bacillus cereus (strain ZK / E33L)</name>
    <dbReference type="NCBI Taxonomy" id="288681"/>
    <lineage>
        <taxon>Bacteria</taxon>
        <taxon>Bacillati</taxon>
        <taxon>Bacillota</taxon>
        <taxon>Bacilli</taxon>
        <taxon>Bacillales</taxon>
        <taxon>Bacillaceae</taxon>
        <taxon>Bacillus</taxon>
        <taxon>Bacillus cereus group</taxon>
    </lineage>
</organism>
<dbReference type="EC" id="3.2.2.27" evidence="1"/>
<dbReference type="EMBL" id="CP000001">
    <property type="protein sequence ID" value="AAU15185.1"/>
    <property type="molecule type" value="Genomic_DNA"/>
</dbReference>
<dbReference type="RefSeq" id="WP_000416807.1">
    <property type="nucleotide sequence ID" value="NZ_CP009968.1"/>
</dbReference>
<dbReference type="SMR" id="Q630K2"/>
<dbReference type="KEGG" id="bcz:BCE33L5096"/>
<dbReference type="PATRIC" id="fig|288681.22.peg.245"/>
<dbReference type="Proteomes" id="UP000002612">
    <property type="component" value="Chromosome"/>
</dbReference>
<dbReference type="GO" id="GO:0005737">
    <property type="term" value="C:cytoplasm"/>
    <property type="evidence" value="ECO:0007669"/>
    <property type="project" value="UniProtKB-SubCell"/>
</dbReference>
<dbReference type="GO" id="GO:0004844">
    <property type="term" value="F:uracil DNA N-glycosylase activity"/>
    <property type="evidence" value="ECO:0007669"/>
    <property type="project" value="UniProtKB-UniRule"/>
</dbReference>
<dbReference type="GO" id="GO:0097510">
    <property type="term" value="P:base-excision repair, AP site formation via deaminated base removal"/>
    <property type="evidence" value="ECO:0007669"/>
    <property type="project" value="TreeGrafter"/>
</dbReference>
<dbReference type="CDD" id="cd10027">
    <property type="entry name" value="UDG-F1-like"/>
    <property type="match status" value="1"/>
</dbReference>
<dbReference type="FunFam" id="3.40.470.10:FF:000001">
    <property type="entry name" value="Uracil-DNA glycosylase"/>
    <property type="match status" value="1"/>
</dbReference>
<dbReference type="Gene3D" id="3.40.470.10">
    <property type="entry name" value="Uracil-DNA glycosylase-like domain"/>
    <property type="match status" value="1"/>
</dbReference>
<dbReference type="HAMAP" id="MF_00148">
    <property type="entry name" value="UDG"/>
    <property type="match status" value="1"/>
</dbReference>
<dbReference type="InterPro" id="IPR002043">
    <property type="entry name" value="UDG_fam1"/>
</dbReference>
<dbReference type="InterPro" id="IPR018085">
    <property type="entry name" value="Ura-DNA_Glyclase_AS"/>
</dbReference>
<dbReference type="InterPro" id="IPR005122">
    <property type="entry name" value="Uracil-DNA_glycosylase-like"/>
</dbReference>
<dbReference type="InterPro" id="IPR036895">
    <property type="entry name" value="Uracil-DNA_glycosylase-like_sf"/>
</dbReference>
<dbReference type="NCBIfam" id="NF003588">
    <property type="entry name" value="PRK05254.1-1"/>
    <property type="match status" value="1"/>
</dbReference>
<dbReference type="NCBIfam" id="NF003589">
    <property type="entry name" value="PRK05254.1-2"/>
    <property type="match status" value="1"/>
</dbReference>
<dbReference type="NCBIfam" id="NF003591">
    <property type="entry name" value="PRK05254.1-4"/>
    <property type="match status" value="1"/>
</dbReference>
<dbReference type="NCBIfam" id="NF003592">
    <property type="entry name" value="PRK05254.1-5"/>
    <property type="match status" value="1"/>
</dbReference>
<dbReference type="NCBIfam" id="TIGR00628">
    <property type="entry name" value="ung"/>
    <property type="match status" value="1"/>
</dbReference>
<dbReference type="PANTHER" id="PTHR11264">
    <property type="entry name" value="URACIL-DNA GLYCOSYLASE"/>
    <property type="match status" value="1"/>
</dbReference>
<dbReference type="PANTHER" id="PTHR11264:SF0">
    <property type="entry name" value="URACIL-DNA GLYCOSYLASE"/>
    <property type="match status" value="1"/>
</dbReference>
<dbReference type="Pfam" id="PF03167">
    <property type="entry name" value="UDG"/>
    <property type="match status" value="1"/>
</dbReference>
<dbReference type="SMART" id="SM00986">
    <property type="entry name" value="UDG"/>
    <property type="match status" value="1"/>
</dbReference>
<dbReference type="SMART" id="SM00987">
    <property type="entry name" value="UreE_C"/>
    <property type="match status" value="1"/>
</dbReference>
<dbReference type="SUPFAM" id="SSF52141">
    <property type="entry name" value="Uracil-DNA glycosylase-like"/>
    <property type="match status" value="1"/>
</dbReference>
<dbReference type="PROSITE" id="PS00130">
    <property type="entry name" value="U_DNA_GLYCOSYLASE"/>
    <property type="match status" value="1"/>
</dbReference>
<evidence type="ECO:0000255" key="1">
    <source>
        <dbReference type="HAMAP-Rule" id="MF_00148"/>
    </source>
</evidence>
<name>UNG_BACCZ</name>
<sequence>MEKVLKNDWGPLLAPEFEKEYYRKLADFLKEEYSTHVVYPKKEDIFNALEYTSYENTKVVILGQDPYHGPNQAHGLSFSVQPGIKTPPSLLNMYKELRDEYGYDIPNNGYLVKWAEQGVLLLNTVLTVRQGEANSHKGKGWEHFTDRVIELLNEREKPVIFILWGRHAQAKKKLITNTKHHIIESVHPSPLSARRGFFGSKPYSKVNTILANMGEREIDWEIPNL</sequence>
<gene>
    <name evidence="1" type="primary">ung</name>
    <name type="ordered locus">BCE33L5096</name>
</gene>
<keyword id="KW-0963">Cytoplasm</keyword>
<keyword id="KW-0227">DNA damage</keyword>
<keyword id="KW-0234">DNA repair</keyword>
<keyword id="KW-0378">Hydrolase</keyword>
<protein>
    <recommendedName>
        <fullName evidence="1">Uracil-DNA glycosylase</fullName>
        <shortName evidence="1">UDG</shortName>
        <ecNumber evidence="1">3.2.2.27</ecNumber>
    </recommendedName>
</protein>
<comment type="function">
    <text evidence="1">Excises uracil residues from the DNA which can arise as a result of misincorporation of dUMP residues by DNA polymerase or due to deamination of cytosine.</text>
</comment>
<comment type="catalytic activity">
    <reaction evidence="1">
        <text>Hydrolyzes single-stranded DNA or mismatched double-stranded DNA and polynucleotides, releasing free uracil.</text>
        <dbReference type="EC" id="3.2.2.27"/>
    </reaction>
</comment>
<comment type="subcellular location">
    <subcellularLocation>
        <location evidence="1">Cytoplasm</location>
    </subcellularLocation>
</comment>
<comment type="similarity">
    <text evidence="1">Belongs to the uracil-DNA glycosylase (UDG) superfamily. UNG family.</text>
</comment>
<reference key="1">
    <citation type="journal article" date="2006" name="J. Bacteriol.">
        <title>Pathogenomic sequence analysis of Bacillus cereus and Bacillus thuringiensis isolates closely related to Bacillus anthracis.</title>
        <authorList>
            <person name="Han C.S."/>
            <person name="Xie G."/>
            <person name="Challacombe J.F."/>
            <person name="Altherr M.R."/>
            <person name="Bhotika S.S."/>
            <person name="Bruce D."/>
            <person name="Campbell C.S."/>
            <person name="Campbell M.L."/>
            <person name="Chen J."/>
            <person name="Chertkov O."/>
            <person name="Cleland C."/>
            <person name="Dimitrijevic M."/>
            <person name="Doggett N.A."/>
            <person name="Fawcett J.J."/>
            <person name="Glavina T."/>
            <person name="Goodwin L.A."/>
            <person name="Hill K.K."/>
            <person name="Hitchcock P."/>
            <person name="Jackson P.J."/>
            <person name="Keim P."/>
            <person name="Kewalramani A.R."/>
            <person name="Longmire J."/>
            <person name="Lucas S."/>
            <person name="Malfatti S."/>
            <person name="McMurry K."/>
            <person name="Meincke L.J."/>
            <person name="Misra M."/>
            <person name="Moseman B.L."/>
            <person name="Mundt M."/>
            <person name="Munk A.C."/>
            <person name="Okinaka R.T."/>
            <person name="Parson-Quintana B."/>
            <person name="Reilly L.P."/>
            <person name="Richardson P."/>
            <person name="Robinson D.L."/>
            <person name="Rubin E."/>
            <person name="Saunders E."/>
            <person name="Tapia R."/>
            <person name="Tesmer J.G."/>
            <person name="Thayer N."/>
            <person name="Thompson L.S."/>
            <person name="Tice H."/>
            <person name="Ticknor L.O."/>
            <person name="Wills P.L."/>
            <person name="Brettin T.S."/>
            <person name="Gilna P."/>
        </authorList>
    </citation>
    <scope>NUCLEOTIDE SEQUENCE [LARGE SCALE GENOMIC DNA]</scope>
    <source>
        <strain>ZK / E33L</strain>
    </source>
</reference>
<feature type="chain" id="PRO_1000009866" description="Uracil-DNA glycosylase">
    <location>
        <begin position="1"/>
        <end position="225"/>
    </location>
</feature>
<feature type="active site" description="Proton acceptor" evidence="1">
    <location>
        <position position="65"/>
    </location>
</feature>
<proteinExistence type="inferred from homology"/>
<accession>Q630K2</accession>